<name>YKCC_BACSU</name>
<dbReference type="EC" id="2.4.-.-"/>
<dbReference type="EMBL" id="AJ002571">
    <property type="protein sequence ID" value="CAA05569.1"/>
    <property type="molecule type" value="Genomic_DNA"/>
</dbReference>
<dbReference type="EMBL" id="AL009126">
    <property type="protein sequence ID" value="CAB13146.2"/>
    <property type="molecule type" value="Genomic_DNA"/>
</dbReference>
<dbReference type="PIR" id="E69855">
    <property type="entry name" value="E69855"/>
</dbReference>
<dbReference type="RefSeq" id="NP_389172.2">
    <property type="nucleotide sequence ID" value="NC_000964.3"/>
</dbReference>
<dbReference type="RefSeq" id="WP_003232632.1">
    <property type="nucleotide sequence ID" value="NZ_OZ025638.1"/>
</dbReference>
<dbReference type="SMR" id="O34319"/>
<dbReference type="FunCoup" id="O34319">
    <property type="interactions" value="568"/>
</dbReference>
<dbReference type="IntAct" id="O34319">
    <property type="interactions" value="45"/>
</dbReference>
<dbReference type="STRING" id="224308.BSU12890"/>
<dbReference type="CAZy" id="GT2">
    <property type="family name" value="Glycosyltransferase Family 2"/>
</dbReference>
<dbReference type="PaxDb" id="224308-BSU12890"/>
<dbReference type="EnsemblBacteria" id="CAB13146">
    <property type="protein sequence ID" value="CAB13146"/>
    <property type="gene ID" value="BSU_12890"/>
</dbReference>
<dbReference type="GeneID" id="936326"/>
<dbReference type="KEGG" id="bsu:BSU12890"/>
<dbReference type="PATRIC" id="fig|224308.179.peg.1399"/>
<dbReference type="eggNOG" id="COG0463">
    <property type="taxonomic scope" value="Bacteria"/>
</dbReference>
<dbReference type="InParanoid" id="O34319"/>
<dbReference type="OrthoDB" id="9807778at2"/>
<dbReference type="PhylomeDB" id="O34319"/>
<dbReference type="BioCyc" id="BSUB:BSU12890-MONOMER"/>
<dbReference type="Proteomes" id="UP000001570">
    <property type="component" value="Chromosome"/>
</dbReference>
<dbReference type="GO" id="GO:0005886">
    <property type="term" value="C:plasma membrane"/>
    <property type="evidence" value="ECO:0000318"/>
    <property type="project" value="GO_Central"/>
</dbReference>
<dbReference type="GO" id="GO:0016757">
    <property type="term" value="F:glycosyltransferase activity"/>
    <property type="evidence" value="ECO:0007669"/>
    <property type="project" value="UniProtKB-KW"/>
</dbReference>
<dbReference type="CDD" id="cd04187">
    <property type="entry name" value="DPM1_like_bac"/>
    <property type="match status" value="1"/>
</dbReference>
<dbReference type="FunFam" id="3.90.550.10:FF:000079">
    <property type="entry name" value="Probable glycosyl transferase"/>
    <property type="match status" value="1"/>
</dbReference>
<dbReference type="Gene3D" id="3.90.550.10">
    <property type="entry name" value="Spore Coat Polysaccharide Biosynthesis Protein SpsA, Chain A"/>
    <property type="match status" value="1"/>
</dbReference>
<dbReference type="InterPro" id="IPR001173">
    <property type="entry name" value="Glyco_trans_2-like"/>
</dbReference>
<dbReference type="InterPro" id="IPR050256">
    <property type="entry name" value="Glycosyltransferase_2"/>
</dbReference>
<dbReference type="InterPro" id="IPR029044">
    <property type="entry name" value="Nucleotide-diphossugar_trans"/>
</dbReference>
<dbReference type="PANTHER" id="PTHR48090:SF1">
    <property type="entry name" value="PROPHAGE BACTOPRENOL GLUCOSYL TRANSFERASE HOMOLOG"/>
    <property type="match status" value="1"/>
</dbReference>
<dbReference type="PANTHER" id="PTHR48090">
    <property type="entry name" value="UNDECAPRENYL-PHOSPHATE 4-DEOXY-4-FORMAMIDO-L-ARABINOSE TRANSFERASE-RELATED"/>
    <property type="match status" value="1"/>
</dbReference>
<dbReference type="Pfam" id="PF00535">
    <property type="entry name" value="Glycos_transf_2"/>
    <property type="match status" value="1"/>
</dbReference>
<dbReference type="SUPFAM" id="SSF53448">
    <property type="entry name" value="Nucleotide-diphospho-sugar transferases"/>
    <property type="match status" value="1"/>
</dbReference>
<evidence type="ECO:0000255" key="1"/>
<evidence type="ECO:0000305" key="2"/>
<accession>O34319</accession>
<sequence>MSRHIQYSIVVPVYNEELVIHETYQRLKEVMDQTKENYELLFVNDGSKDRSIEILREHSLIDPRVKIIDFSRNFGHQIAITAGMDYAQGNAIVVIDADLQDPPELILEMIEKWKEGYEVVYAVRTKRKGETFFKKQTAAMFYRLLSGMTDIDIPIDTGDFRLMDRKVCDEMKRLKEKNPFVRGLVSWVGFKQTAVEYVRDERLAGETKYPLKKMLKLSMDGITTFSHKPLKLASYAGILMSGTGFLYMFIVLYLKLFTDSTITGWSSLIVIQLLFSGIVLLILGVIGEYIGRIYDEAKDRPLYIVQKSYGIENKRLYRDQHMS</sequence>
<organism>
    <name type="scientific">Bacillus subtilis (strain 168)</name>
    <dbReference type="NCBI Taxonomy" id="224308"/>
    <lineage>
        <taxon>Bacteria</taxon>
        <taxon>Bacillati</taxon>
        <taxon>Bacillota</taxon>
        <taxon>Bacilli</taxon>
        <taxon>Bacillales</taxon>
        <taxon>Bacillaceae</taxon>
        <taxon>Bacillus</taxon>
    </lineage>
</organism>
<feature type="chain" id="PRO_0000059209" description="Uncharacterized glycosyltransferase YkcC">
    <location>
        <begin position="1"/>
        <end position="323"/>
    </location>
</feature>
<feature type="transmembrane region" description="Helical" evidence="1">
    <location>
        <begin position="232"/>
        <end position="252"/>
    </location>
</feature>
<feature type="transmembrane region" description="Helical" evidence="1">
    <location>
        <begin position="267"/>
        <end position="287"/>
    </location>
</feature>
<feature type="sequence conflict" description="In Ref. 1; CAA05569." evidence="2" ref="1">
    <original>F</original>
    <variation>S</variation>
    <location>
        <position position="190"/>
    </location>
</feature>
<protein>
    <recommendedName>
        <fullName>Uncharacterized glycosyltransferase YkcC</fullName>
        <ecNumber>2.4.-.-</ecNumber>
    </recommendedName>
</protein>
<reference key="1">
    <citation type="submission" date="1997-11" db="EMBL/GenBank/DDBJ databases">
        <title>Sequence of the Bacillus subtilis genome between xlyA and ykoR.</title>
        <authorList>
            <person name="Devine K.M."/>
        </authorList>
    </citation>
    <scope>NUCLEOTIDE SEQUENCE [GENOMIC DNA]</scope>
    <source>
        <strain>168</strain>
    </source>
</reference>
<reference key="2">
    <citation type="journal article" date="1997" name="Nature">
        <title>The complete genome sequence of the Gram-positive bacterium Bacillus subtilis.</title>
        <authorList>
            <person name="Kunst F."/>
            <person name="Ogasawara N."/>
            <person name="Moszer I."/>
            <person name="Albertini A.M."/>
            <person name="Alloni G."/>
            <person name="Azevedo V."/>
            <person name="Bertero M.G."/>
            <person name="Bessieres P."/>
            <person name="Bolotin A."/>
            <person name="Borchert S."/>
            <person name="Borriss R."/>
            <person name="Boursier L."/>
            <person name="Brans A."/>
            <person name="Braun M."/>
            <person name="Brignell S.C."/>
            <person name="Bron S."/>
            <person name="Brouillet S."/>
            <person name="Bruschi C.V."/>
            <person name="Caldwell B."/>
            <person name="Capuano V."/>
            <person name="Carter N.M."/>
            <person name="Choi S.-K."/>
            <person name="Codani J.-J."/>
            <person name="Connerton I.F."/>
            <person name="Cummings N.J."/>
            <person name="Daniel R.A."/>
            <person name="Denizot F."/>
            <person name="Devine K.M."/>
            <person name="Duesterhoeft A."/>
            <person name="Ehrlich S.D."/>
            <person name="Emmerson P.T."/>
            <person name="Entian K.-D."/>
            <person name="Errington J."/>
            <person name="Fabret C."/>
            <person name="Ferrari E."/>
            <person name="Foulger D."/>
            <person name="Fritz C."/>
            <person name="Fujita M."/>
            <person name="Fujita Y."/>
            <person name="Fuma S."/>
            <person name="Galizzi A."/>
            <person name="Galleron N."/>
            <person name="Ghim S.-Y."/>
            <person name="Glaser P."/>
            <person name="Goffeau A."/>
            <person name="Golightly E.J."/>
            <person name="Grandi G."/>
            <person name="Guiseppi G."/>
            <person name="Guy B.J."/>
            <person name="Haga K."/>
            <person name="Haiech J."/>
            <person name="Harwood C.R."/>
            <person name="Henaut A."/>
            <person name="Hilbert H."/>
            <person name="Holsappel S."/>
            <person name="Hosono S."/>
            <person name="Hullo M.-F."/>
            <person name="Itaya M."/>
            <person name="Jones L.-M."/>
            <person name="Joris B."/>
            <person name="Karamata D."/>
            <person name="Kasahara Y."/>
            <person name="Klaerr-Blanchard M."/>
            <person name="Klein C."/>
            <person name="Kobayashi Y."/>
            <person name="Koetter P."/>
            <person name="Koningstein G."/>
            <person name="Krogh S."/>
            <person name="Kumano M."/>
            <person name="Kurita K."/>
            <person name="Lapidus A."/>
            <person name="Lardinois S."/>
            <person name="Lauber J."/>
            <person name="Lazarevic V."/>
            <person name="Lee S.-M."/>
            <person name="Levine A."/>
            <person name="Liu H."/>
            <person name="Masuda S."/>
            <person name="Mauel C."/>
            <person name="Medigue C."/>
            <person name="Medina N."/>
            <person name="Mellado R.P."/>
            <person name="Mizuno M."/>
            <person name="Moestl D."/>
            <person name="Nakai S."/>
            <person name="Noback M."/>
            <person name="Noone D."/>
            <person name="O'Reilly M."/>
            <person name="Ogawa K."/>
            <person name="Ogiwara A."/>
            <person name="Oudega B."/>
            <person name="Park S.-H."/>
            <person name="Parro V."/>
            <person name="Pohl T.M."/>
            <person name="Portetelle D."/>
            <person name="Porwollik S."/>
            <person name="Prescott A.M."/>
            <person name="Presecan E."/>
            <person name="Pujic P."/>
            <person name="Purnelle B."/>
            <person name="Rapoport G."/>
            <person name="Rey M."/>
            <person name="Reynolds S."/>
            <person name="Rieger M."/>
            <person name="Rivolta C."/>
            <person name="Rocha E."/>
            <person name="Roche B."/>
            <person name="Rose M."/>
            <person name="Sadaie Y."/>
            <person name="Sato T."/>
            <person name="Scanlan E."/>
            <person name="Schleich S."/>
            <person name="Schroeter R."/>
            <person name="Scoffone F."/>
            <person name="Sekiguchi J."/>
            <person name="Sekowska A."/>
            <person name="Seror S.J."/>
            <person name="Serror P."/>
            <person name="Shin B.-S."/>
            <person name="Soldo B."/>
            <person name="Sorokin A."/>
            <person name="Tacconi E."/>
            <person name="Takagi T."/>
            <person name="Takahashi H."/>
            <person name="Takemaru K."/>
            <person name="Takeuchi M."/>
            <person name="Tamakoshi A."/>
            <person name="Tanaka T."/>
            <person name="Terpstra P."/>
            <person name="Tognoni A."/>
            <person name="Tosato V."/>
            <person name="Uchiyama S."/>
            <person name="Vandenbol M."/>
            <person name="Vannier F."/>
            <person name="Vassarotti A."/>
            <person name="Viari A."/>
            <person name="Wambutt R."/>
            <person name="Wedler E."/>
            <person name="Wedler H."/>
            <person name="Weitzenegger T."/>
            <person name="Winters P."/>
            <person name="Wipat A."/>
            <person name="Yamamoto H."/>
            <person name="Yamane K."/>
            <person name="Yasumoto K."/>
            <person name="Yata K."/>
            <person name="Yoshida K."/>
            <person name="Yoshikawa H.-F."/>
            <person name="Zumstein E."/>
            <person name="Yoshikawa H."/>
            <person name="Danchin A."/>
        </authorList>
    </citation>
    <scope>NUCLEOTIDE SEQUENCE [LARGE SCALE GENOMIC DNA]</scope>
    <source>
        <strain>168</strain>
    </source>
</reference>
<reference key="3">
    <citation type="journal article" date="2009" name="Microbiology">
        <title>From a consortium sequence to a unified sequence: the Bacillus subtilis 168 reference genome a decade later.</title>
        <authorList>
            <person name="Barbe V."/>
            <person name="Cruveiller S."/>
            <person name="Kunst F."/>
            <person name="Lenoble P."/>
            <person name="Meurice G."/>
            <person name="Sekowska A."/>
            <person name="Vallenet D."/>
            <person name="Wang T."/>
            <person name="Moszer I."/>
            <person name="Medigue C."/>
            <person name="Danchin A."/>
        </authorList>
    </citation>
    <scope>SEQUENCE REVISION TO 190</scope>
</reference>
<keyword id="KW-1003">Cell membrane</keyword>
<keyword id="KW-0328">Glycosyltransferase</keyword>
<keyword id="KW-0472">Membrane</keyword>
<keyword id="KW-1185">Reference proteome</keyword>
<keyword id="KW-0808">Transferase</keyword>
<keyword id="KW-0812">Transmembrane</keyword>
<keyword id="KW-1133">Transmembrane helix</keyword>
<gene>
    <name type="primary">ykcC</name>
    <name type="ordered locus">BSU12890</name>
</gene>
<proteinExistence type="inferred from homology"/>
<comment type="subcellular location">
    <subcellularLocation>
        <location evidence="2">Cell membrane</location>
        <topology evidence="2">Multi-pass membrane protein</topology>
    </subcellularLocation>
</comment>
<comment type="similarity">
    <text evidence="2">Belongs to the glycosyltransferase 2 family. GtrB subfamily.</text>
</comment>